<evidence type="ECO:0000255" key="1">
    <source>
        <dbReference type="HAMAP-Rule" id="MF_00076"/>
    </source>
</evidence>
<protein>
    <recommendedName>
        <fullName evidence="1">Imidazoleglycerol-phosphate dehydratase</fullName>
        <shortName evidence="1">IGPD</shortName>
        <ecNumber evidence="1">4.2.1.19</ecNumber>
    </recommendedName>
</protein>
<reference key="1">
    <citation type="journal article" date="2000" name="Science">
        <title>Complete genome sequence of Neisseria meningitidis serogroup B strain MC58.</title>
        <authorList>
            <person name="Tettelin H."/>
            <person name="Saunders N.J."/>
            <person name="Heidelberg J.F."/>
            <person name="Jeffries A.C."/>
            <person name="Nelson K.E."/>
            <person name="Eisen J.A."/>
            <person name="Ketchum K.A."/>
            <person name="Hood D.W."/>
            <person name="Peden J.F."/>
            <person name="Dodson R.J."/>
            <person name="Nelson W.C."/>
            <person name="Gwinn M.L."/>
            <person name="DeBoy R.T."/>
            <person name="Peterson J.D."/>
            <person name="Hickey E.K."/>
            <person name="Haft D.H."/>
            <person name="Salzberg S.L."/>
            <person name="White O."/>
            <person name="Fleischmann R.D."/>
            <person name="Dougherty B.A."/>
            <person name="Mason T.M."/>
            <person name="Ciecko A."/>
            <person name="Parksey D.S."/>
            <person name="Blair E."/>
            <person name="Cittone H."/>
            <person name="Clark E.B."/>
            <person name="Cotton M.D."/>
            <person name="Utterback T.R."/>
            <person name="Khouri H.M."/>
            <person name="Qin H."/>
            <person name="Vamathevan J.J."/>
            <person name="Gill J."/>
            <person name="Scarlato V."/>
            <person name="Masignani V."/>
            <person name="Pizza M."/>
            <person name="Grandi G."/>
            <person name="Sun L."/>
            <person name="Smith H.O."/>
            <person name="Fraser C.M."/>
            <person name="Moxon E.R."/>
            <person name="Rappuoli R."/>
            <person name="Venter J.C."/>
        </authorList>
    </citation>
    <scope>NUCLEOTIDE SEQUENCE [LARGE SCALE GENOMIC DNA]</scope>
    <source>
        <strain>ATCC BAA-335 / MC58</strain>
    </source>
</reference>
<dbReference type="EC" id="4.2.1.19" evidence="1"/>
<dbReference type="EMBL" id="AE002098">
    <property type="protein sequence ID" value="AAF41936.1"/>
    <property type="molecule type" value="Genomic_DNA"/>
</dbReference>
<dbReference type="PIR" id="G81067">
    <property type="entry name" value="G81067"/>
</dbReference>
<dbReference type="RefSeq" id="NP_274589.2">
    <property type="nucleotide sequence ID" value="NC_003112.2"/>
</dbReference>
<dbReference type="SMR" id="P64371"/>
<dbReference type="FunCoup" id="P64371">
    <property type="interactions" value="363"/>
</dbReference>
<dbReference type="STRING" id="122586.NMB1583"/>
<dbReference type="PaxDb" id="122586-NMB1583"/>
<dbReference type="KEGG" id="nme:NMB1583"/>
<dbReference type="PATRIC" id="fig|122586.8.peg.2034"/>
<dbReference type="HOGENOM" id="CLU_044308_1_1_4"/>
<dbReference type="InParanoid" id="P64371"/>
<dbReference type="OrthoDB" id="9790411at2"/>
<dbReference type="UniPathway" id="UPA00031">
    <property type="reaction ID" value="UER00011"/>
</dbReference>
<dbReference type="Proteomes" id="UP000000425">
    <property type="component" value="Chromosome"/>
</dbReference>
<dbReference type="GO" id="GO:0005737">
    <property type="term" value="C:cytoplasm"/>
    <property type="evidence" value="ECO:0007669"/>
    <property type="project" value="UniProtKB-SubCell"/>
</dbReference>
<dbReference type="GO" id="GO:0004424">
    <property type="term" value="F:imidazoleglycerol-phosphate dehydratase activity"/>
    <property type="evidence" value="ECO:0000318"/>
    <property type="project" value="GO_Central"/>
</dbReference>
<dbReference type="GO" id="GO:0000105">
    <property type="term" value="P:L-histidine biosynthetic process"/>
    <property type="evidence" value="ECO:0000318"/>
    <property type="project" value="GO_Central"/>
</dbReference>
<dbReference type="CDD" id="cd07914">
    <property type="entry name" value="IGPD"/>
    <property type="match status" value="1"/>
</dbReference>
<dbReference type="FunFam" id="3.30.230.40:FF:000002">
    <property type="entry name" value="Imidazoleglycerol-phosphate dehydratase"/>
    <property type="match status" value="1"/>
</dbReference>
<dbReference type="FunFam" id="3.30.230.40:FF:000003">
    <property type="entry name" value="Imidazoleglycerol-phosphate dehydratase HisB"/>
    <property type="match status" value="1"/>
</dbReference>
<dbReference type="Gene3D" id="3.30.230.40">
    <property type="entry name" value="Imidazole glycerol phosphate dehydratase, domain 1"/>
    <property type="match status" value="2"/>
</dbReference>
<dbReference type="HAMAP" id="MF_00076">
    <property type="entry name" value="HisB"/>
    <property type="match status" value="1"/>
</dbReference>
<dbReference type="InterPro" id="IPR038494">
    <property type="entry name" value="IGPD_sf"/>
</dbReference>
<dbReference type="InterPro" id="IPR000807">
    <property type="entry name" value="ImidazoleglycerolP_deHydtase"/>
</dbReference>
<dbReference type="InterPro" id="IPR020565">
    <property type="entry name" value="ImidazoleglycerP_deHydtase_CS"/>
</dbReference>
<dbReference type="InterPro" id="IPR020568">
    <property type="entry name" value="Ribosomal_Su5_D2-typ_SF"/>
</dbReference>
<dbReference type="NCBIfam" id="NF002106">
    <property type="entry name" value="PRK00951.1-1"/>
    <property type="match status" value="1"/>
</dbReference>
<dbReference type="NCBIfam" id="NF002109">
    <property type="entry name" value="PRK00951.1-5"/>
    <property type="match status" value="1"/>
</dbReference>
<dbReference type="NCBIfam" id="NF002111">
    <property type="entry name" value="PRK00951.2-1"/>
    <property type="match status" value="1"/>
</dbReference>
<dbReference type="NCBIfam" id="NF002114">
    <property type="entry name" value="PRK00951.2-4"/>
    <property type="match status" value="1"/>
</dbReference>
<dbReference type="PANTHER" id="PTHR23133:SF2">
    <property type="entry name" value="IMIDAZOLEGLYCEROL-PHOSPHATE DEHYDRATASE"/>
    <property type="match status" value="1"/>
</dbReference>
<dbReference type="PANTHER" id="PTHR23133">
    <property type="entry name" value="IMIDAZOLEGLYCEROL-PHOSPHATE DEHYDRATASE HIS7"/>
    <property type="match status" value="1"/>
</dbReference>
<dbReference type="Pfam" id="PF00475">
    <property type="entry name" value="IGPD"/>
    <property type="match status" value="1"/>
</dbReference>
<dbReference type="SUPFAM" id="SSF54211">
    <property type="entry name" value="Ribosomal protein S5 domain 2-like"/>
    <property type="match status" value="2"/>
</dbReference>
<dbReference type="PROSITE" id="PS00954">
    <property type="entry name" value="IGP_DEHYDRATASE_1"/>
    <property type="match status" value="1"/>
</dbReference>
<dbReference type="PROSITE" id="PS00955">
    <property type="entry name" value="IGP_DEHYDRATASE_2"/>
    <property type="match status" value="1"/>
</dbReference>
<keyword id="KW-0028">Amino-acid biosynthesis</keyword>
<keyword id="KW-0963">Cytoplasm</keyword>
<keyword id="KW-0368">Histidine biosynthesis</keyword>
<keyword id="KW-0456">Lyase</keyword>
<keyword id="KW-1185">Reference proteome</keyword>
<sequence>MNLTKTQRQLHNFLTLAQEAGSLSKLAKLCGYRTPVALYKLKQRLEKQAEDPDARGIRPSLMAKLEKHTGKPKGWLDRKHRERTVPETAAESTGTAETQIAETASAAGCRSVTVNRNTCETQITVSINLDGSGKSRLDTGVPFLEHMIDQIARHGMIDIDISCKGDLHIDDHHTAEDIGITLGQAIRQALGDKKGIRRYGHSYVPLDEALSRVVIDLSGRPGLVYNIEFTRALIGRFDVDLFEEFFHGIVNHSMMTLHIDNLSGKNAHHQAETVFKAFGRALRMAVEHDPRMAGQTPSTKGTLTA</sequence>
<name>HIS7_NEIMB</name>
<proteinExistence type="inferred from homology"/>
<feature type="chain" id="PRO_0000158148" description="Imidazoleglycerol-phosphate dehydratase">
    <location>
        <begin position="1"/>
        <end position="305"/>
    </location>
</feature>
<comment type="catalytic activity">
    <reaction evidence="1">
        <text>D-erythro-1-(imidazol-4-yl)glycerol 3-phosphate = 3-(imidazol-4-yl)-2-oxopropyl phosphate + H2O</text>
        <dbReference type="Rhea" id="RHEA:11040"/>
        <dbReference type="ChEBI" id="CHEBI:15377"/>
        <dbReference type="ChEBI" id="CHEBI:57766"/>
        <dbReference type="ChEBI" id="CHEBI:58278"/>
        <dbReference type="EC" id="4.2.1.19"/>
    </reaction>
</comment>
<comment type="pathway">
    <text evidence="1">Amino-acid biosynthesis; L-histidine biosynthesis; L-histidine from 5-phospho-alpha-D-ribose 1-diphosphate: step 6/9.</text>
</comment>
<comment type="subcellular location">
    <subcellularLocation>
        <location evidence="1">Cytoplasm</location>
    </subcellularLocation>
</comment>
<comment type="similarity">
    <text evidence="1">Belongs to the imidazoleglycerol-phosphate dehydratase family.</text>
</comment>
<accession>P64371</accession>
<accession>Q9JRJ7</accession>
<organism>
    <name type="scientific">Neisseria meningitidis serogroup B (strain ATCC BAA-335 / MC58)</name>
    <dbReference type="NCBI Taxonomy" id="122586"/>
    <lineage>
        <taxon>Bacteria</taxon>
        <taxon>Pseudomonadati</taxon>
        <taxon>Pseudomonadota</taxon>
        <taxon>Betaproteobacteria</taxon>
        <taxon>Neisseriales</taxon>
        <taxon>Neisseriaceae</taxon>
        <taxon>Neisseria</taxon>
    </lineage>
</organism>
<gene>
    <name evidence="1" type="primary">hisB</name>
    <name type="ordered locus">NMB1583</name>
</gene>